<gene>
    <name type="primary">cytC</name>
</gene>
<accession>P00038</accession>
<accession>Q6J4P9</accession>
<keyword id="KW-0903">Direct protein sequencing</keyword>
<keyword id="KW-0249">Electron transport</keyword>
<keyword id="KW-0349">Heme</keyword>
<keyword id="KW-0408">Iron</keyword>
<keyword id="KW-0479">Metal-binding</keyword>
<keyword id="KW-0496">Mitochondrion</keyword>
<keyword id="KW-1185">Reference proteome</keyword>
<keyword id="KW-0679">Respiratory chain</keyword>
<keyword id="KW-0813">Transport</keyword>
<name>CYC_APIME</name>
<evidence type="ECO:0000255" key="1">
    <source>
        <dbReference type="PROSITE-ProRule" id="PRU00433"/>
    </source>
</evidence>
<evidence type="ECO:0000269" key="2">
    <source>
    </source>
</evidence>
<evidence type="ECO:0000305" key="3"/>
<comment type="function">
    <text>Electron carrier protein. The oxidized form of the cytochrome c heme group can accept an electron from the heme group of the cytochrome c1 subunit of cytochrome reductase. Cytochrome c then transfers this electron to the cytochrome oxidase complex, the final protein carrier in the mitochondrial electron-transport chain.</text>
</comment>
<comment type="subcellular location">
    <subcellularLocation>
        <location>Mitochondrion intermembrane space</location>
    </subcellularLocation>
    <text>Loosely associated with the inner membrane.</text>
</comment>
<comment type="PTM">
    <text>Binds 1 heme c group covalently per subunit.</text>
</comment>
<comment type="similarity">
    <text evidence="3">Belongs to the cytochrome c family.</text>
</comment>
<comment type="online information" name="Protein Spotlight">
    <link uri="https://www.proteinspotlight.org/back_issues/076"/>
    <text>Life shuttle - Issue 76 of November 2006</text>
</comment>
<feature type="initiator methionine" description="Removed" evidence="2">
    <location>
        <position position="1"/>
    </location>
</feature>
<feature type="chain" id="PRO_0000108258" description="Cytochrome c">
    <location>
        <begin position="2"/>
        <end position="108"/>
    </location>
</feature>
<feature type="binding site" description="covalent" evidence="1 2">
    <location>
        <position position="19"/>
    </location>
    <ligand>
        <name>heme c</name>
        <dbReference type="ChEBI" id="CHEBI:61717"/>
    </ligand>
</feature>
<feature type="binding site" description="covalent" evidence="1 2">
    <location>
        <position position="22"/>
    </location>
    <ligand>
        <name>heme c</name>
        <dbReference type="ChEBI" id="CHEBI:61717"/>
    </ligand>
</feature>
<feature type="binding site" description="axial binding residue">
    <location>
        <position position="23"/>
    </location>
    <ligand>
        <name>heme c</name>
        <dbReference type="ChEBI" id="CHEBI:61717"/>
    </ligand>
    <ligandPart>
        <name>Fe</name>
        <dbReference type="ChEBI" id="CHEBI:18248"/>
    </ligandPart>
</feature>
<feature type="binding site" description="axial binding residue">
    <location>
        <position position="85"/>
    </location>
    <ligand>
        <name>heme c</name>
        <dbReference type="ChEBI" id="CHEBI:61717"/>
    </ligand>
    <ligandPart>
        <name>Fe</name>
        <dbReference type="ChEBI" id="CHEBI:18248"/>
    </ligandPart>
</feature>
<proteinExistence type="evidence at protein level"/>
<sequence>MGIPAGDPEKGKKIFVQKCAQCHTIESGGKHKVGPNLYGVYGRKTGQAPGYSYTDANKGKGITWNKETLFEYLENPKKYIPGTKMVFAGLKKPQERADLIAYIEQASK</sequence>
<organism>
    <name type="scientific">Apis mellifera</name>
    <name type="common">Honeybee</name>
    <dbReference type="NCBI Taxonomy" id="7460"/>
    <lineage>
        <taxon>Eukaryota</taxon>
        <taxon>Metazoa</taxon>
        <taxon>Ecdysozoa</taxon>
        <taxon>Arthropoda</taxon>
        <taxon>Hexapoda</taxon>
        <taxon>Insecta</taxon>
        <taxon>Pterygota</taxon>
        <taxon>Neoptera</taxon>
        <taxon>Endopterygota</taxon>
        <taxon>Hymenoptera</taxon>
        <taxon>Apocrita</taxon>
        <taxon>Aculeata</taxon>
        <taxon>Apoidea</taxon>
        <taxon>Anthophila</taxon>
        <taxon>Apidae</taxon>
        <taxon>Apis</taxon>
    </lineage>
</organism>
<dbReference type="EMBL" id="AY601642">
    <property type="protein sequence ID" value="AAT12410.1"/>
    <property type="molecule type" value="mRNA"/>
</dbReference>
<dbReference type="PIR" id="A00031">
    <property type="entry name" value="CCHB"/>
</dbReference>
<dbReference type="RefSeq" id="NP_001170961.1">
    <property type="nucleotide sequence ID" value="NM_001177490.1"/>
</dbReference>
<dbReference type="SMR" id="P00038"/>
<dbReference type="FunCoup" id="P00038">
    <property type="interactions" value="922"/>
</dbReference>
<dbReference type="STRING" id="7460.P00038"/>
<dbReference type="PaxDb" id="7460-GB48784-PA"/>
<dbReference type="EnsemblMetazoa" id="NM_001177490">
    <property type="protein sequence ID" value="NP_001170961"/>
    <property type="gene ID" value="GeneID_408270"/>
</dbReference>
<dbReference type="GeneID" id="408270"/>
<dbReference type="KEGG" id="ame:408270"/>
<dbReference type="CTD" id="100118315"/>
<dbReference type="eggNOG" id="KOG3453">
    <property type="taxonomic scope" value="Eukaryota"/>
</dbReference>
<dbReference type="HOGENOM" id="CLU_060944_3_0_1"/>
<dbReference type="InParanoid" id="P00038"/>
<dbReference type="OMA" id="KARCAQC"/>
<dbReference type="OrthoDB" id="449280at2759"/>
<dbReference type="PhylomeDB" id="P00038"/>
<dbReference type="Proteomes" id="UP000005203">
    <property type="component" value="Linkage group LG10"/>
</dbReference>
<dbReference type="GO" id="GO:0005758">
    <property type="term" value="C:mitochondrial intermembrane space"/>
    <property type="evidence" value="ECO:0007669"/>
    <property type="project" value="UniProtKB-SubCell"/>
</dbReference>
<dbReference type="GO" id="GO:0009055">
    <property type="term" value="F:electron transfer activity"/>
    <property type="evidence" value="ECO:0007669"/>
    <property type="project" value="InterPro"/>
</dbReference>
<dbReference type="GO" id="GO:0020037">
    <property type="term" value="F:heme binding"/>
    <property type="evidence" value="ECO:0007669"/>
    <property type="project" value="InterPro"/>
</dbReference>
<dbReference type="GO" id="GO:0046872">
    <property type="term" value="F:metal ion binding"/>
    <property type="evidence" value="ECO:0007669"/>
    <property type="project" value="UniProtKB-KW"/>
</dbReference>
<dbReference type="FunFam" id="1.10.760.10:FF:000001">
    <property type="entry name" value="Cytochrome c iso-1"/>
    <property type="match status" value="1"/>
</dbReference>
<dbReference type="Gene3D" id="1.10.760.10">
    <property type="entry name" value="Cytochrome c-like domain"/>
    <property type="match status" value="1"/>
</dbReference>
<dbReference type="InterPro" id="IPR009056">
    <property type="entry name" value="Cyt_c-like_dom"/>
</dbReference>
<dbReference type="InterPro" id="IPR036909">
    <property type="entry name" value="Cyt_c-like_dom_sf"/>
</dbReference>
<dbReference type="InterPro" id="IPR002327">
    <property type="entry name" value="Cyt_c_1A/1B"/>
</dbReference>
<dbReference type="PANTHER" id="PTHR11961">
    <property type="entry name" value="CYTOCHROME C"/>
    <property type="match status" value="1"/>
</dbReference>
<dbReference type="Pfam" id="PF00034">
    <property type="entry name" value="Cytochrom_C"/>
    <property type="match status" value="1"/>
</dbReference>
<dbReference type="PRINTS" id="PR00604">
    <property type="entry name" value="CYTCHRMECIAB"/>
</dbReference>
<dbReference type="SUPFAM" id="SSF46626">
    <property type="entry name" value="Cytochrome c"/>
    <property type="match status" value="1"/>
</dbReference>
<dbReference type="PROSITE" id="PS51007">
    <property type="entry name" value="CYTC"/>
    <property type="match status" value="1"/>
</dbReference>
<protein>
    <recommendedName>
        <fullName>Cytochrome c</fullName>
    </recommendedName>
</protein>
<reference key="1">
    <citation type="submission" date="2004-04" db="EMBL/GenBank/DDBJ databases">
        <title>Molecular mechanisms of honey bee queen longevity.</title>
        <authorList>
            <person name="Corona M."/>
            <person name="Hughes K.A."/>
            <person name="Weaver D.B."/>
            <person name="Robinson G.E."/>
        </authorList>
    </citation>
    <scope>NUCLEOTIDE SEQUENCE [MRNA]</scope>
</reference>
<reference key="2">
    <citation type="journal article" date="1985" name="J. Biochem.">
        <title>Complete amino acid sequence of cytochrome c from the honeybee, Apis mellifera, and evolutionary relationship of the honeybee to other insects on the basis of the amino acid sequence.</title>
        <authorList>
            <person name="Inoue S."/>
            <person name="Matsubara H."/>
            <person name="Yamanaka T."/>
        </authorList>
    </citation>
    <scope>PROTEIN SEQUENCE OF 2-108</scope>
</reference>